<keyword id="KW-1003">Cell membrane</keyword>
<keyword id="KW-0285">Flavoprotein</keyword>
<keyword id="KW-0288">FMN</keyword>
<keyword id="KW-0472">Membrane</keyword>
<keyword id="KW-0560">Oxidoreductase</keyword>
<keyword id="KW-0665">Pyrimidine biosynthesis</keyword>
<sequence length="336" mass="36765">MLYRLARAGFFQLDAEKAHDLAISNFKRFTGTPFDLFYRQQLPHRPVQCMGLTFKNPVGLAAGLDKNGECIEAFGAMGFGFVEVGTVTPRPQAGNDKPRLFRLVHAEGIINRMGFNNLGVDHLVENVKRAKYDGIIGINIGKNKDTPIEKGAEDYLICMDKVYPYAGYIAVNISSPNTPGLRSLQYGEALDELLAALKTRQAELAAKHDKYVPLALKIAPDLSDDEIQQICQSLLKNKIDSVIATNTTLDRSLVEGMKFANEAGGLSGRPLQNRSTEVIKCLYKELGEEIPIIGVGGIDSYISAKEKLLAGAKLVQVYSGFIYQGPGLVADIVKNL</sequence>
<organism>
    <name type="scientific">Vibrio cholerae serotype O1 (strain ATCC 39541 / Classical Ogawa 395 / O395)</name>
    <dbReference type="NCBI Taxonomy" id="345073"/>
    <lineage>
        <taxon>Bacteria</taxon>
        <taxon>Pseudomonadati</taxon>
        <taxon>Pseudomonadota</taxon>
        <taxon>Gammaproteobacteria</taxon>
        <taxon>Vibrionales</taxon>
        <taxon>Vibrionaceae</taxon>
        <taxon>Vibrio</taxon>
    </lineage>
</organism>
<comment type="function">
    <text evidence="1">Catalyzes the conversion of dihydroorotate to orotate with quinone as electron acceptor.</text>
</comment>
<comment type="catalytic activity">
    <reaction evidence="1">
        <text>(S)-dihydroorotate + a quinone = orotate + a quinol</text>
        <dbReference type="Rhea" id="RHEA:30187"/>
        <dbReference type="ChEBI" id="CHEBI:24646"/>
        <dbReference type="ChEBI" id="CHEBI:30839"/>
        <dbReference type="ChEBI" id="CHEBI:30864"/>
        <dbReference type="ChEBI" id="CHEBI:132124"/>
        <dbReference type="EC" id="1.3.5.2"/>
    </reaction>
</comment>
<comment type="cofactor">
    <cofactor evidence="1">
        <name>FMN</name>
        <dbReference type="ChEBI" id="CHEBI:58210"/>
    </cofactor>
    <text evidence="1">Binds 1 FMN per subunit.</text>
</comment>
<comment type="pathway">
    <text evidence="1">Pyrimidine metabolism; UMP biosynthesis via de novo pathway; orotate from (S)-dihydroorotate (quinone route): step 1/1.</text>
</comment>
<comment type="subunit">
    <text evidence="1">Monomer.</text>
</comment>
<comment type="subcellular location">
    <subcellularLocation>
        <location evidence="1">Cell membrane</location>
        <topology evidence="1">Peripheral membrane protein</topology>
    </subcellularLocation>
</comment>
<comment type="similarity">
    <text evidence="1">Belongs to the dihydroorotate dehydrogenase family. Type 2 subfamily.</text>
</comment>
<protein>
    <recommendedName>
        <fullName evidence="1">Dihydroorotate dehydrogenase (quinone)</fullName>
        <ecNumber evidence="1">1.3.5.2</ecNumber>
    </recommendedName>
    <alternativeName>
        <fullName evidence="1">DHOdehase</fullName>
        <shortName evidence="1">DHOD</shortName>
        <shortName evidence="1">DHODase</shortName>
    </alternativeName>
    <alternativeName>
        <fullName evidence="1">Dihydroorotate oxidase</fullName>
    </alternativeName>
</protein>
<accession>A5F839</accession>
<accession>C3M0Q1</accession>
<name>PYRD_VIBC3</name>
<reference key="1">
    <citation type="submission" date="2007-03" db="EMBL/GenBank/DDBJ databases">
        <authorList>
            <person name="Heidelberg J."/>
        </authorList>
    </citation>
    <scope>NUCLEOTIDE SEQUENCE [LARGE SCALE GENOMIC DNA]</scope>
    <source>
        <strain>ATCC 39541 / Classical Ogawa 395 / O395</strain>
    </source>
</reference>
<reference key="2">
    <citation type="journal article" date="2008" name="PLoS ONE">
        <title>A recalibrated molecular clock and independent origins for the cholera pandemic clones.</title>
        <authorList>
            <person name="Feng L."/>
            <person name="Reeves P.R."/>
            <person name="Lan R."/>
            <person name="Ren Y."/>
            <person name="Gao C."/>
            <person name="Zhou Z."/>
            <person name="Ren Y."/>
            <person name="Cheng J."/>
            <person name="Wang W."/>
            <person name="Wang J."/>
            <person name="Qian W."/>
            <person name="Li D."/>
            <person name="Wang L."/>
        </authorList>
    </citation>
    <scope>NUCLEOTIDE SEQUENCE [LARGE SCALE GENOMIC DNA]</scope>
    <source>
        <strain>ATCC 39541 / Classical Ogawa 395 / O395</strain>
    </source>
</reference>
<gene>
    <name evidence="1" type="primary">pyrD</name>
    <name type="ordered locus">VC0395_A1098</name>
    <name type="ordered locus">VC395_1611</name>
</gene>
<dbReference type="EC" id="1.3.5.2" evidence="1"/>
<dbReference type="EMBL" id="CP000627">
    <property type="protein sequence ID" value="ABQ21979.1"/>
    <property type="molecule type" value="Genomic_DNA"/>
</dbReference>
<dbReference type="EMBL" id="CP001235">
    <property type="protein sequence ID" value="ACP09617.1"/>
    <property type="molecule type" value="Genomic_DNA"/>
</dbReference>
<dbReference type="RefSeq" id="WP_000966885.1">
    <property type="nucleotide sequence ID" value="NZ_JAACZH010000009.1"/>
</dbReference>
<dbReference type="SMR" id="A5F839"/>
<dbReference type="KEGG" id="vco:VC0395_A1098"/>
<dbReference type="KEGG" id="vcr:VC395_1611"/>
<dbReference type="PATRIC" id="fig|345073.21.peg.1556"/>
<dbReference type="eggNOG" id="COG0167">
    <property type="taxonomic scope" value="Bacteria"/>
</dbReference>
<dbReference type="HOGENOM" id="CLU_013640_2_0_6"/>
<dbReference type="OrthoDB" id="9802377at2"/>
<dbReference type="UniPathway" id="UPA00070">
    <property type="reaction ID" value="UER00946"/>
</dbReference>
<dbReference type="Proteomes" id="UP000000249">
    <property type="component" value="Chromosome 2"/>
</dbReference>
<dbReference type="GO" id="GO:0005737">
    <property type="term" value="C:cytoplasm"/>
    <property type="evidence" value="ECO:0007669"/>
    <property type="project" value="InterPro"/>
</dbReference>
<dbReference type="GO" id="GO:0005886">
    <property type="term" value="C:plasma membrane"/>
    <property type="evidence" value="ECO:0007669"/>
    <property type="project" value="UniProtKB-SubCell"/>
</dbReference>
<dbReference type="GO" id="GO:0106430">
    <property type="term" value="F:dihydroorotate dehydrogenase (quinone) activity"/>
    <property type="evidence" value="ECO:0007669"/>
    <property type="project" value="UniProtKB-EC"/>
</dbReference>
<dbReference type="GO" id="GO:0006207">
    <property type="term" value="P:'de novo' pyrimidine nucleobase biosynthetic process"/>
    <property type="evidence" value="ECO:0007669"/>
    <property type="project" value="InterPro"/>
</dbReference>
<dbReference type="GO" id="GO:0044205">
    <property type="term" value="P:'de novo' UMP biosynthetic process"/>
    <property type="evidence" value="ECO:0007669"/>
    <property type="project" value="UniProtKB-UniRule"/>
</dbReference>
<dbReference type="CDD" id="cd04738">
    <property type="entry name" value="DHOD_2_like"/>
    <property type="match status" value="1"/>
</dbReference>
<dbReference type="FunFam" id="3.20.20.70:FF:000028">
    <property type="entry name" value="Dihydroorotate dehydrogenase (quinone)"/>
    <property type="match status" value="1"/>
</dbReference>
<dbReference type="Gene3D" id="3.20.20.70">
    <property type="entry name" value="Aldolase class I"/>
    <property type="match status" value="1"/>
</dbReference>
<dbReference type="HAMAP" id="MF_00225">
    <property type="entry name" value="DHO_dh_type2"/>
    <property type="match status" value="1"/>
</dbReference>
<dbReference type="InterPro" id="IPR013785">
    <property type="entry name" value="Aldolase_TIM"/>
</dbReference>
<dbReference type="InterPro" id="IPR050074">
    <property type="entry name" value="DHO_dehydrogenase"/>
</dbReference>
<dbReference type="InterPro" id="IPR012135">
    <property type="entry name" value="Dihydroorotate_DH_1_2"/>
</dbReference>
<dbReference type="InterPro" id="IPR005719">
    <property type="entry name" value="Dihydroorotate_DH_2"/>
</dbReference>
<dbReference type="InterPro" id="IPR005720">
    <property type="entry name" value="Dihydroorotate_DH_cat"/>
</dbReference>
<dbReference type="InterPro" id="IPR001295">
    <property type="entry name" value="Dihydroorotate_DH_CS"/>
</dbReference>
<dbReference type="NCBIfam" id="NF003644">
    <property type="entry name" value="PRK05286.1-1"/>
    <property type="match status" value="1"/>
</dbReference>
<dbReference type="NCBIfam" id="NF003645">
    <property type="entry name" value="PRK05286.1-2"/>
    <property type="match status" value="1"/>
</dbReference>
<dbReference type="NCBIfam" id="NF003646">
    <property type="entry name" value="PRK05286.1-4"/>
    <property type="match status" value="1"/>
</dbReference>
<dbReference type="NCBIfam" id="NF003652">
    <property type="entry name" value="PRK05286.2-5"/>
    <property type="match status" value="1"/>
</dbReference>
<dbReference type="NCBIfam" id="TIGR01036">
    <property type="entry name" value="pyrD_sub2"/>
    <property type="match status" value="1"/>
</dbReference>
<dbReference type="PANTHER" id="PTHR48109:SF4">
    <property type="entry name" value="DIHYDROOROTATE DEHYDROGENASE (QUINONE), MITOCHONDRIAL"/>
    <property type="match status" value="1"/>
</dbReference>
<dbReference type="PANTHER" id="PTHR48109">
    <property type="entry name" value="DIHYDROOROTATE DEHYDROGENASE (QUINONE), MITOCHONDRIAL-RELATED"/>
    <property type="match status" value="1"/>
</dbReference>
<dbReference type="Pfam" id="PF01180">
    <property type="entry name" value="DHO_dh"/>
    <property type="match status" value="1"/>
</dbReference>
<dbReference type="PIRSF" id="PIRSF000164">
    <property type="entry name" value="DHO_oxidase"/>
    <property type="match status" value="1"/>
</dbReference>
<dbReference type="SUPFAM" id="SSF51395">
    <property type="entry name" value="FMN-linked oxidoreductases"/>
    <property type="match status" value="1"/>
</dbReference>
<dbReference type="PROSITE" id="PS00911">
    <property type="entry name" value="DHODEHASE_1"/>
    <property type="match status" value="1"/>
</dbReference>
<dbReference type="PROSITE" id="PS00912">
    <property type="entry name" value="DHODEHASE_2"/>
    <property type="match status" value="1"/>
</dbReference>
<evidence type="ECO:0000255" key="1">
    <source>
        <dbReference type="HAMAP-Rule" id="MF_00225"/>
    </source>
</evidence>
<proteinExistence type="inferred from homology"/>
<feature type="chain" id="PRO_1000071769" description="Dihydroorotate dehydrogenase (quinone)">
    <location>
        <begin position="1"/>
        <end position="336"/>
    </location>
</feature>
<feature type="active site" description="Nucleophile" evidence="1">
    <location>
        <position position="175"/>
    </location>
</feature>
<feature type="binding site" evidence="1">
    <location>
        <begin position="62"/>
        <end position="66"/>
    </location>
    <ligand>
        <name>FMN</name>
        <dbReference type="ChEBI" id="CHEBI:58210"/>
    </ligand>
</feature>
<feature type="binding site" evidence="1">
    <location>
        <position position="66"/>
    </location>
    <ligand>
        <name>substrate</name>
    </ligand>
</feature>
<feature type="binding site" evidence="1">
    <location>
        <position position="86"/>
    </location>
    <ligand>
        <name>FMN</name>
        <dbReference type="ChEBI" id="CHEBI:58210"/>
    </ligand>
</feature>
<feature type="binding site" evidence="1">
    <location>
        <begin position="111"/>
        <end position="115"/>
    </location>
    <ligand>
        <name>substrate</name>
    </ligand>
</feature>
<feature type="binding site" evidence="1">
    <location>
        <position position="139"/>
    </location>
    <ligand>
        <name>FMN</name>
        <dbReference type="ChEBI" id="CHEBI:58210"/>
    </ligand>
</feature>
<feature type="binding site" evidence="1">
    <location>
        <position position="172"/>
    </location>
    <ligand>
        <name>FMN</name>
        <dbReference type="ChEBI" id="CHEBI:58210"/>
    </ligand>
</feature>
<feature type="binding site" evidence="1">
    <location>
        <position position="172"/>
    </location>
    <ligand>
        <name>substrate</name>
    </ligand>
</feature>
<feature type="binding site" evidence="1">
    <location>
        <position position="177"/>
    </location>
    <ligand>
        <name>substrate</name>
    </ligand>
</feature>
<feature type="binding site" evidence="1">
    <location>
        <position position="217"/>
    </location>
    <ligand>
        <name>FMN</name>
        <dbReference type="ChEBI" id="CHEBI:58210"/>
    </ligand>
</feature>
<feature type="binding site" evidence="1">
    <location>
        <position position="245"/>
    </location>
    <ligand>
        <name>FMN</name>
        <dbReference type="ChEBI" id="CHEBI:58210"/>
    </ligand>
</feature>
<feature type="binding site" evidence="1">
    <location>
        <begin position="246"/>
        <end position="247"/>
    </location>
    <ligand>
        <name>substrate</name>
    </ligand>
</feature>
<feature type="binding site" evidence="1">
    <location>
        <position position="268"/>
    </location>
    <ligand>
        <name>FMN</name>
        <dbReference type="ChEBI" id="CHEBI:58210"/>
    </ligand>
</feature>
<feature type="binding site" evidence="1">
    <location>
        <position position="297"/>
    </location>
    <ligand>
        <name>FMN</name>
        <dbReference type="ChEBI" id="CHEBI:58210"/>
    </ligand>
</feature>
<feature type="binding site" evidence="1">
    <location>
        <begin position="318"/>
        <end position="319"/>
    </location>
    <ligand>
        <name>FMN</name>
        <dbReference type="ChEBI" id="CHEBI:58210"/>
    </ligand>
</feature>